<proteinExistence type="inferred from homology"/>
<keyword id="KW-0131">Cell cycle</keyword>
<keyword id="KW-0132">Cell division</keyword>
<keyword id="KW-0195">Cyclin</keyword>
<keyword id="KW-1185">Reference proteome</keyword>
<comment type="similarity">
    <text evidence="2">Belongs to the cyclin family. Cyclin F subfamily.</text>
</comment>
<name>CCF11_ORYSJ</name>
<sequence length="369" mass="40679">MAAARLPSPAPVAHPPALRARPLAPHLYAALPRAPYPAWQEPLPLPEGGDHPVPPKKKIKVAPLLPERADQPVVTSNSATTTRPQLCAPYDDEIEATLRAMETNPAERPSPYFLETTQGGRMTALVRASMIAFMDEFSRFHELADGTLQRAAYFLDRYLSVTPESDDALQLRLVGATAVFLAAKYEDQYTLRKIDASMVAARRGYTSETRHKMVSIMETEMLAALGFNLGGPTAYTFVEHFTRYYGDGEEEELLKEAAHRFADGSLLTYGFHRYLPSIVAASSIFLARLDVLGHEPWSQDLAELTGYKAIDLMGCVCDMEEKSRRAAAQHHLESKPAGAAGVGINSSGDDHTRPIRPAHLYIVSCRCSW</sequence>
<accession>Q6K1Z1</accession>
<protein>
    <recommendedName>
        <fullName>Putative cyclin-F1-1</fullName>
        <shortName>CycF1;1</shortName>
    </recommendedName>
</protein>
<reference key="1">
    <citation type="journal article" date="2005" name="Nature">
        <title>The map-based sequence of the rice genome.</title>
        <authorList>
            <consortium name="International rice genome sequencing project (IRGSP)"/>
        </authorList>
    </citation>
    <scope>NUCLEOTIDE SEQUENCE [LARGE SCALE GENOMIC DNA]</scope>
    <source>
        <strain>cv. Nipponbare</strain>
    </source>
</reference>
<reference key="2">
    <citation type="journal article" date="2013" name="Rice">
        <title>Improvement of the Oryza sativa Nipponbare reference genome using next generation sequence and optical map data.</title>
        <authorList>
            <person name="Kawahara Y."/>
            <person name="de la Bastide M."/>
            <person name="Hamilton J.P."/>
            <person name="Kanamori H."/>
            <person name="McCombie W.R."/>
            <person name="Ouyang S."/>
            <person name="Schwartz D.C."/>
            <person name="Tanaka T."/>
            <person name="Wu J."/>
            <person name="Zhou S."/>
            <person name="Childs K.L."/>
            <person name="Davidson R.M."/>
            <person name="Lin H."/>
            <person name="Quesada-Ocampo L."/>
            <person name="Vaillancourt B."/>
            <person name="Sakai H."/>
            <person name="Lee S.S."/>
            <person name="Kim J."/>
            <person name="Numa H."/>
            <person name="Itoh T."/>
            <person name="Buell C.R."/>
            <person name="Matsumoto T."/>
        </authorList>
    </citation>
    <scope>GENOME REANNOTATION</scope>
    <source>
        <strain>cv. Nipponbare</strain>
    </source>
</reference>
<reference key="3">
    <citation type="journal article" date="2006" name="Mol. Genet. Genomics">
        <title>Genome-wide analysis of cyclin family in rice (Oryza sativa L.).</title>
        <authorList>
            <person name="La H."/>
            <person name="Li J."/>
            <person name="Ji Z."/>
            <person name="Cheng Y."/>
            <person name="Li X."/>
            <person name="Jiang S."/>
            <person name="Venkatesh P.N."/>
            <person name="Ramachandran S."/>
        </authorList>
    </citation>
    <scope>GENE FAMILY</scope>
    <scope>NOMENCLATURE</scope>
</reference>
<gene>
    <name type="primary">CYCF1-1</name>
    <name type="ordered locus">Os02g0607400</name>
    <name type="ordered locus">LOC_Os02g39470</name>
    <name type="ORF">OSJNBa0030C08.20</name>
</gene>
<dbReference type="EMBL" id="AP006438">
    <property type="protein sequence ID" value="BAD20140.1"/>
    <property type="molecule type" value="Genomic_DNA"/>
</dbReference>
<dbReference type="EMBL" id="AP014958">
    <property type="status" value="NOT_ANNOTATED_CDS"/>
    <property type="molecule type" value="Genomic_DNA"/>
</dbReference>
<dbReference type="SMR" id="Q6K1Z1"/>
<dbReference type="FunCoup" id="Q6K1Z1">
    <property type="interactions" value="21"/>
</dbReference>
<dbReference type="STRING" id="39947.Q6K1Z1"/>
<dbReference type="PaxDb" id="39947-Q6K1Z1"/>
<dbReference type="eggNOG" id="KOG0654">
    <property type="taxonomic scope" value="Eukaryota"/>
</dbReference>
<dbReference type="HOGENOM" id="CLU_052910_1_0_1"/>
<dbReference type="InParanoid" id="Q6K1Z1"/>
<dbReference type="Proteomes" id="UP000000763">
    <property type="component" value="Chromosome 2"/>
</dbReference>
<dbReference type="Proteomes" id="UP000059680">
    <property type="component" value="Chromosome 2"/>
</dbReference>
<dbReference type="GO" id="GO:0000307">
    <property type="term" value="C:cyclin-dependent protein kinase holoenzyme complex"/>
    <property type="evidence" value="ECO:0000318"/>
    <property type="project" value="GO_Central"/>
</dbReference>
<dbReference type="GO" id="GO:0005737">
    <property type="term" value="C:cytoplasm"/>
    <property type="evidence" value="ECO:0000318"/>
    <property type="project" value="GO_Central"/>
</dbReference>
<dbReference type="GO" id="GO:0005634">
    <property type="term" value="C:nucleus"/>
    <property type="evidence" value="ECO:0000318"/>
    <property type="project" value="GO_Central"/>
</dbReference>
<dbReference type="GO" id="GO:0016538">
    <property type="term" value="F:cyclin-dependent protein serine/threonine kinase regulator activity"/>
    <property type="evidence" value="ECO:0000318"/>
    <property type="project" value="GO_Central"/>
</dbReference>
<dbReference type="GO" id="GO:0051301">
    <property type="term" value="P:cell division"/>
    <property type="evidence" value="ECO:0007669"/>
    <property type="project" value="UniProtKB-KW"/>
</dbReference>
<dbReference type="GO" id="GO:0000082">
    <property type="term" value="P:G1/S transition of mitotic cell cycle"/>
    <property type="evidence" value="ECO:0000318"/>
    <property type="project" value="GO_Central"/>
</dbReference>
<dbReference type="FunFam" id="1.10.472.10:FF:000115">
    <property type="entry name" value="Os02g0607400 protein"/>
    <property type="match status" value="1"/>
</dbReference>
<dbReference type="FunFam" id="1.10.472.10:FF:000133">
    <property type="entry name" value="Putative cyclin-F1-2"/>
    <property type="match status" value="1"/>
</dbReference>
<dbReference type="Gene3D" id="1.10.472.10">
    <property type="entry name" value="Cyclin-like"/>
    <property type="match status" value="2"/>
</dbReference>
<dbReference type="InterPro" id="IPR039361">
    <property type="entry name" value="Cyclin"/>
</dbReference>
<dbReference type="InterPro" id="IPR013763">
    <property type="entry name" value="Cyclin-like_dom"/>
</dbReference>
<dbReference type="InterPro" id="IPR036915">
    <property type="entry name" value="Cyclin-like_sf"/>
</dbReference>
<dbReference type="InterPro" id="IPR004367">
    <property type="entry name" value="Cyclin_C-dom"/>
</dbReference>
<dbReference type="InterPro" id="IPR006671">
    <property type="entry name" value="Cyclin_N"/>
</dbReference>
<dbReference type="PANTHER" id="PTHR10177">
    <property type="entry name" value="CYCLINS"/>
    <property type="match status" value="1"/>
</dbReference>
<dbReference type="Pfam" id="PF02984">
    <property type="entry name" value="Cyclin_C"/>
    <property type="match status" value="1"/>
</dbReference>
<dbReference type="Pfam" id="PF00134">
    <property type="entry name" value="Cyclin_N"/>
    <property type="match status" value="1"/>
</dbReference>
<dbReference type="SMART" id="SM00385">
    <property type="entry name" value="CYCLIN"/>
    <property type="match status" value="2"/>
</dbReference>
<dbReference type="SMART" id="SM01332">
    <property type="entry name" value="Cyclin_C"/>
    <property type="match status" value="1"/>
</dbReference>
<dbReference type="SUPFAM" id="SSF47954">
    <property type="entry name" value="Cyclin-like"/>
    <property type="match status" value="2"/>
</dbReference>
<evidence type="ECO:0000256" key="1">
    <source>
        <dbReference type="SAM" id="MobiDB-lite"/>
    </source>
</evidence>
<evidence type="ECO:0000305" key="2"/>
<organism>
    <name type="scientific">Oryza sativa subsp. japonica</name>
    <name type="common">Rice</name>
    <dbReference type="NCBI Taxonomy" id="39947"/>
    <lineage>
        <taxon>Eukaryota</taxon>
        <taxon>Viridiplantae</taxon>
        <taxon>Streptophyta</taxon>
        <taxon>Embryophyta</taxon>
        <taxon>Tracheophyta</taxon>
        <taxon>Spermatophyta</taxon>
        <taxon>Magnoliopsida</taxon>
        <taxon>Liliopsida</taxon>
        <taxon>Poales</taxon>
        <taxon>Poaceae</taxon>
        <taxon>BOP clade</taxon>
        <taxon>Oryzoideae</taxon>
        <taxon>Oryzeae</taxon>
        <taxon>Oryzinae</taxon>
        <taxon>Oryza</taxon>
        <taxon>Oryza sativa</taxon>
    </lineage>
</organism>
<feature type="chain" id="PRO_0000287041" description="Putative cyclin-F1-1">
    <location>
        <begin position="1"/>
        <end position="369"/>
    </location>
</feature>
<feature type="region of interest" description="Disordered" evidence="1">
    <location>
        <begin position="328"/>
        <end position="350"/>
    </location>
</feature>